<reference evidence="5" key="1">
    <citation type="journal article" date="2009" name="BMC Evol. Biol.">
        <title>A proteomic approach for studying insect phylogeny: CAPA peptides of ancient insect taxa (Dictyoptera, Blattoptera) as a test case.</title>
        <authorList>
            <person name="Roth S."/>
            <person name="Fromm B."/>
            <person name="Gaede G."/>
            <person name="Predel R."/>
        </authorList>
    </citation>
    <scope>PROTEIN SEQUENCE</scope>
    <scope>AMIDATION AT PHE-11</scope>
    <source>
        <tissue evidence="3">Corpora cardiaca</tissue>
    </source>
</reference>
<dbReference type="GO" id="GO:0005576">
    <property type="term" value="C:extracellular region"/>
    <property type="evidence" value="ECO:0007669"/>
    <property type="project" value="UniProtKB-SubCell"/>
</dbReference>
<dbReference type="GO" id="GO:0005179">
    <property type="term" value="F:hormone activity"/>
    <property type="evidence" value="ECO:0007669"/>
    <property type="project" value="UniProtKB-KW"/>
</dbReference>
<dbReference type="GO" id="GO:0007218">
    <property type="term" value="P:neuropeptide signaling pathway"/>
    <property type="evidence" value="ECO:0007669"/>
    <property type="project" value="UniProtKB-KW"/>
</dbReference>
<dbReference type="InterPro" id="IPR013152">
    <property type="entry name" value="Gastrin/cholecystokinin_CS"/>
</dbReference>
<dbReference type="InterPro" id="IPR013259">
    <property type="entry name" value="Sulfakinin"/>
</dbReference>
<dbReference type="Pfam" id="PF08257">
    <property type="entry name" value="Sulfakinin"/>
    <property type="match status" value="1"/>
</dbReference>
<dbReference type="PROSITE" id="PS00259">
    <property type="entry name" value="GASTRIN"/>
    <property type="match status" value="1"/>
</dbReference>
<feature type="peptide" id="PRO_0000378876" description="Sulfakinin-1" evidence="3">
    <location>
        <begin position="1"/>
        <end position="11"/>
    </location>
</feature>
<feature type="modified residue" description="Sulfotyrosine" evidence="1">
    <location>
        <position position="6"/>
    </location>
</feature>
<feature type="modified residue" description="Phenylalanine amide" evidence="3">
    <location>
        <position position="11"/>
    </location>
</feature>
<name>SK1_EUBSB</name>
<organism>
    <name type="scientific">Eublaberus sp. (strain BF-2008)</name>
    <name type="common">Cockroach</name>
    <dbReference type="NCBI Taxonomy" id="521510"/>
    <lineage>
        <taxon>Eukaryota</taxon>
        <taxon>Metazoa</taxon>
        <taxon>Ecdysozoa</taxon>
        <taxon>Arthropoda</taxon>
        <taxon>Hexapoda</taxon>
        <taxon>Insecta</taxon>
        <taxon>Pterygota</taxon>
        <taxon>Neoptera</taxon>
        <taxon>Polyneoptera</taxon>
        <taxon>Dictyoptera</taxon>
        <taxon>Blattodea</taxon>
        <taxon>Blaberoidea</taxon>
        <taxon>Blaberidae</taxon>
        <taxon>Blaberinae</taxon>
        <taxon>Eublaberus</taxon>
    </lineage>
</organism>
<comment type="function">
    <text evidence="1">Myotropic peptide.</text>
</comment>
<comment type="subcellular location">
    <subcellularLocation>
        <location evidence="5">Secreted</location>
    </subcellularLocation>
</comment>
<comment type="similarity">
    <text evidence="2">Belongs to the gastrin/cholecystokinin family.</text>
</comment>
<proteinExistence type="evidence at protein level"/>
<keyword id="KW-0027">Amidation</keyword>
<keyword id="KW-0903">Direct protein sequencing</keyword>
<keyword id="KW-0372">Hormone</keyword>
<keyword id="KW-0527">Neuropeptide</keyword>
<keyword id="KW-0964">Secreted</keyword>
<keyword id="KW-0765">Sulfation</keyword>
<evidence type="ECO:0000250" key="1">
    <source>
        <dbReference type="UniProtKB" id="P41493"/>
    </source>
</evidence>
<evidence type="ECO:0000255" key="2"/>
<evidence type="ECO:0000269" key="3">
    <source>
    </source>
</evidence>
<evidence type="ECO:0000303" key="4">
    <source>
    </source>
</evidence>
<evidence type="ECO:0000305" key="5"/>
<protein>
    <recommendedName>
        <fullName evidence="4">Sulfakinin-1</fullName>
        <shortName evidence="4">EubSp-SK-1</shortName>
    </recommendedName>
</protein>
<accession>P85631</accession>
<sequence length="11" mass="1459">EQFEDYGHMRF</sequence>